<feature type="peptide" id="PRO_0000439477" description="Cruzioseptin-9" evidence="2">
    <location>
        <begin position="3"/>
        <end position="29"/>
    </location>
</feature>
<feature type="propeptide" id="PRO_0000439478" evidence="5">
    <location>
        <begin position="31"/>
        <end position="32"/>
    </location>
</feature>
<feature type="modified residue" description="Glutamine amide" evidence="5">
    <location>
        <position position="29"/>
    </location>
</feature>
<feature type="non-terminal residue" evidence="6">
    <location>
        <position position="1"/>
    </location>
</feature>
<evidence type="ECO:0000250" key="1">
    <source>
        <dbReference type="UniProtKB" id="A0A193H362"/>
    </source>
</evidence>
<evidence type="ECO:0000269" key="2">
    <source>
    </source>
</evidence>
<evidence type="ECO:0000303" key="3">
    <source>
    </source>
</evidence>
<evidence type="ECO:0000305" key="4"/>
<evidence type="ECO:0000305" key="5">
    <source>
    </source>
</evidence>
<evidence type="ECO:0000312" key="6">
    <source>
        <dbReference type="EMBL" id="ANN87766.1"/>
    </source>
</evidence>
<accession>A0A193H327</accession>
<keyword id="KW-0027">Amidation</keyword>
<keyword id="KW-0878">Amphibian defense peptide</keyword>
<keyword id="KW-0929">Antimicrobial</keyword>
<keyword id="KW-0165">Cleavage on pair of basic residues</keyword>
<keyword id="KW-0964">Secreted</keyword>
<dbReference type="EMBL" id="KX065086">
    <property type="protein sequence ID" value="ANN87766.1"/>
    <property type="molecule type" value="mRNA"/>
</dbReference>
<dbReference type="SMR" id="A0A193H327"/>
<dbReference type="GO" id="GO:0005576">
    <property type="term" value="C:extracellular region"/>
    <property type="evidence" value="ECO:0007669"/>
    <property type="project" value="UniProtKB-SubCell"/>
</dbReference>
<dbReference type="GO" id="GO:0006952">
    <property type="term" value="P:defense response"/>
    <property type="evidence" value="ECO:0007669"/>
    <property type="project" value="UniProtKB-KW"/>
</dbReference>
<dbReference type="InterPro" id="IPR022731">
    <property type="entry name" value="Dermaseptin_dom"/>
</dbReference>
<dbReference type="Pfam" id="PF12121">
    <property type="entry name" value="DD_K"/>
    <property type="match status" value="1"/>
</dbReference>
<name>CZS9_CRUCA</name>
<sequence length="32" mass="3395">KRGFLDVITHVGKAVGKAALNAVNEMVNQGEQ</sequence>
<protein>
    <recommendedName>
        <fullName evidence="3">Cruzioseptin-9</fullName>
        <shortName evidence="3">CZS-9</shortName>
    </recommendedName>
</protein>
<proteinExistence type="evidence at protein level"/>
<comment type="function">
    <text evidence="1">Has antimicrobial activity.</text>
</comment>
<comment type="subcellular location">
    <subcellularLocation>
        <location evidence="2">Secreted</location>
    </subcellularLocation>
</comment>
<comment type="tissue specificity">
    <text evidence="5">Expressed by the skin glands.</text>
</comment>
<comment type="mass spectrometry" mass="2794.48" method="Electrospray" evidence="2"/>
<comment type="similarity">
    <text evidence="4">Belongs to the frog skin active peptide (FSAP) family. Cruzioseptin subfamily.</text>
</comment>
<reference evidence="6" key="1">
    <citation type="journal article" date="2016" name="J. Proteomics">
        <title>Peptidomic approach identifies cruzioseptins, a new family of potent antimicrobial peptides in the splendid leaf frog, Cruziohyla calcarifer.</title>
        <authorList>
            <person name="Proano-Bolanos C."/>
            <person name="Zhou M."/>
            <person name="Wang L."/>
            <person name="Coloma L.A."/>
            <person name="Chen T."/>
            <person name="Shaw C."/>
        </authorList>
    </citation>
    <scope>NUCLEOTIDE SEQUENCE [MRNA]</scope>
    <scope>SUBCELLULAR LOCATION</scope>
    <scope>MASS SPECTROMETRY</scope>
    <scope>AMIDATION AT GLN-29</scope>
    <scope>IDENTIFICATION BY MASS SPECTROMETRY</scope>
    <source>
        <tissue evidence="6">Skin secretion</tissue>
    </source>
</reference>
<organism evidence="6">
    <name type="scientific">Cruziohyla calcarifer</name>
    <name type="common">Splendid leaf frog</name>
    <name type="synonym">Agalychnis calcarifer</name>
    <dbReference type="NCBI Taxonomy" id="318249"/>
    <lineage>
        <taxon>Eukaryota</taxon>
        <taxon>Metazoa</taxon>
        <taxon>Chordata</taxon>
        <taxon>Craniata</taxon>
        <taxon>Vertebrata</taxon>
        <taxon>Euteleostomi</taxon>
        <taxon>Amphibia</taxon>
        <taxon>Batrachia</taxon>
        <taxon>Anura</taxon>
        <taxon>Neobatrachia</taxon>
        <taxon>Hyloidea</taxon>
        <taxon>Hylidae</taxon>
        <taxon>Phyllomedusinae</taxon>
        <taxon>Cruziohyla</taxon>
    </lineage>
</organism>
<gene>
    <name evidence="6" type="primary">CZS-9</name>
</gene>